<comment type="function">
    <text evidence="1">Secreted metalloproteinase that allows assimilation of proteinaceous substrates. Plays a pivotal role as a pathogenicity determinant during infections and contributes to the ability of the pathogen to persist within the mammalian host (By similarity).</text>
</comment>
<comment type="subcellular location">
    <subcellularLocation>
        <location evidence="1">Secreted</location>
    </subcellularLocation>
</comment>
<comment type="similarity">
    <text evidence="4">Belongs to the peptidase M43B family.</text>
</comment>
<comment type="sequence caution" evidence="4">
    <conflict type="erroneous gene model prediction">
        <sequence resource="EMBL-CDS" id="EFE38422"/>
    </conflict>
</comment>
<reference key="1">
    <citation type="journal article" date="2011" name="Genome Biol.">
        <title>Comparative and functional genomics provide insights into the pathogenicity of dermatophytic fungi.</title>
        <authorList>
            <person name="Burmester A."/>
            <person name="Shelest E."/>
            <person name="Gloeckner G."/>
            <person name="Heddergott C."/>
            <person name="Schindler S."/>
            <person name="Staib P."/>
            <person name="Heidel A."/>
            <person name="Felder M."/>
            <person name="Petzold A."/>
            <person name="Szafranski K."/>
            <person name="Feuermann M."/>
            <person name="Pedruzzi I."/>
            <person name="Priebe S."/>
            <person name="Groth M."/>
            <person name="Winkler R."/>
            <person name="Li W."/>
            <person name="Kniemeyer O."/>
            <person name="Schroeckh V."/>
            <person name="Hertweck C."/>
            <person name="Hube B."/>
            <person name="White T.C."/>
            <person name="Platzer M."/>
            <person name="Guthke R."/>
            <person name="Heitman J."/>
            <person name="Woestemeyer J."/>
            <person name="Zipfel P.F."/>
            <person name="Monod M."/>
            <person name="Brakhage A.A."/>
        </authorList>
    </citation>
    <scope>NUCLEOTIDE SEQUENCE [LARGE SCALE GENOMIC DNA]</scope>
    <source>
        <strain>HKI 0517</strain>
    </source>
</reference>
<proteinExistence type="inferred from homology"/>
<dbReference type="EC" id="3.4.24.-"/>
<dbReference type="EMBL" id="ACYE01000399">
    <property type="protein sequence ID" value="EFE38422.1"/>
    <property type="status" value="ALT_SEQ"/>
    <property type="molecule type" value="Genomic_DNA"/>
</dbReference>
<dbReference type="RefSeq" id="XP_003019067.1">
    <property type="nucleotide sequence ID" value="XM_003019021.1"/>
</dbReference>
<dbReference type="SMR" id="D4DI84"/>
<dbReference type="GeneID" id="9582552"/>
<dbReference type="KEGG" id="tve:TRV_06892"/>
<dbReference type="HOGENOM" id="CLU_048726_0_0_1"/>
<dbReference type="OrthoDB" id="879at34384"/>
<dbReference type="Proteomes" id="UP000008383">
    <property type="component" value="Unassembled WGS sequence"/>
</dbReference>
<dbReference type="GO" id="GO:0005576">
    <property type="term" value="C:extracellular region"/>
    <property type="evidence" value="ECO:0007669"/>
    <property type="project" value="UniProtKB-SubCell"/>
</dbReference>
<dbReference type="GO" id="GO:0046872">
    <property type="term" value="F:metal ion binding"/>
    <property type="evidence" value="ECO:0007669"/>
    <property type="project" value="UniProtKB-KW"/>
</dbReference>
<dbReference type="GO" id="GO:0008237">
    <property type="term" value="F:metallopeptidase activity"/>
    <property type="evidence" value="ECO:0007669"/>
    <property type="project" value="UniProtKB-KW"/>
</dbReference>
<dbReference type="GO" id="GO:0006508">
    <property type="term" value="P:proteolysis"/>
    <property type="evidence" value="ECO:0007669"/>
    <property type="project" value="UniProtKB-KW"/>
</dbReference>
<dbReference type="CDD" id="cd04275">
    <property type="entry name" value="ZnMc_pappalysin_like"/>
    <property type="match status" value="1"/>
</dbReference>
<dbReference type="Gene3D" id="3.40.390.10">
    <property type="entry name" value="Collagenase (Catalytic Domain)"/>
    <property type="match status" value="1"/>
</dbReference>
<dbReference type="InterPro" id="IPR024079">
    <property type="entry name" value="MetalloPept_cat_dom_sf"/>
</dbReference>
<dbReference type="InterPro" id="IPR008754">
    <property type="entry name" value="Peptidase_M43"/>
</dbReference>
<dbReference type="PANTHER" id="PTHR47466">
    <property type="match status" value="1"/>
</dbReference>
<dbReference type="PANTHER" id="PTHR47466:SF1">
    <property type="entry name" value="METALLOPROTEASE MEP1 (AFU_ORTHOLOGUE AFUA_1G07730)-RELATED"/>
    <property type="match status" value="1"/>
</dbReference>
<dbReference type="Pfam" id="PF05572">
    <property type="entry name" value="Peptidase_M43"/>
    <property type="match status" value="1"/>
</dbReference>
<dbReference type="SUPFAM" id="SSF55486">
    <property type="entry name" value="Metalloproteases ('zincins'), catalytic domain"/>
    <property type="match status" value="1"/>
</dbReference>
<dbReference type="PROSITE" id="PS00142">
    <property type="entry name" value="ZINC_PROTEASE"/>
    <property type="match status" value="1"/>
</dbReference>
<accession>D4DI84</accession>
<gene>
    <name type="ORF">TRV_06892</name>
</gene>
<evidence type="ECO:0000250" key="1"/>
<evidence type="ECO:0000255" key="2"/>
<evidence type="ECO:0000255" key="3">
    <source>
        <dbReference type="PROSITE-ProRule" id="PRU10095"/>
    </source>
</evidence>
<evidence type="ECO:0000305" key="4"/>
<name>MEP6_TRIVH</name>
<keyword id="KW-1015">Disulfide bond</keyword>
<keyword id="KW-0325">Glycoprotein</keyword>
<keyword id="KW-0378">Hydrolase</keyword>
<keyword id="KW-0479">Metal-binding</keyword>
<keyword id="KW-0482">Metalloprotease</keyword>
<keyword id="KW-0645">Protease</keyword>
<keyword id="KW-0964">Secreted</keyword>
<keyword id="KW-0732">Signal</keyword>
<keyword id="KW-0843">Virulence</keyword>
<keyword id="KW-0862">Zinc</keyword>
<sequence>MRFSVLLTGLAAAGSIATAERTCGAVPPRAYEKEFTEALNSLSPEAASADLTAGITIDTYLHVLTSGQTGNIPDSQLQAQINAMNQHYSQAGVQFRLVKATRTDNANWASGRDEAGMKKALHMGTYSSLNIYFIPNLSSGLLGICYFPRANPSQTTIIMDGCMVRSGTVPGGETTNYNQGKTATHEVGHFLGLYHVFSENGSCVDADMVADTPAQSKKTSGCPSSQDSCPGGGVDSIHNYMDYSYDVCMNQFTPGQANRIAQSWRAFRAGH</sequence>
<protein>
    <recommendedName>
        <fullName>Extracellular metalloprotease TRV_06892</fullName>
        <ecNumber>3.4.24.-</ecNumber>
    </recommendedName>
</protein>
<feature type="signal peptide" evidence="2">
    <location>
        <begin position="1"/>
        <end position="19"/>
    </location>
</feature>
<feature type="chain" id="PRO_0000407213" description="Extracellular metalloprotease TRV_06892">
    <location>
        <begin position="20"/>
        <end position="271"/>
    </location>
</feature>
<feature type="active site" evidence="3">
    <location>
        <position position="186"/>
    </location>
</feature>
<feature type="binding site" evidence="3">
    <location>
        <position position="185"/>
    </location>
    <ligand>
        <name>Zn(2+)</name>
        <dbReference type="ChEBI" id="CHEBI:29105"/>
        <note>catalytic</note>
    </ligand>
</feature>
<feature type="binding site" evidence="3">
    <location>
        <position position="189"/>
    </location>
    <ligand>
        <name>Zn(2+)</name>
        <dbReference type="ChEBI" id="CHEBI:29105"/>
        <note>catalytic</note>
    </ligand>
</feature>
<feature type="glycosylation site" description="N-linked (GlcNAc...) asparagine" evidence="2">
    <location>
        <position position="136"/>
    </location>
</feature>
<feature type="glycosylation site" description="N-linked (GlcNAc...) asparagine" evidence="2">
    <location>
        <position position="200"/>
    </location>
</feature>
<feature type="disulfide bond" evidence="1">
    <location>
        <begin position="222"/>
        <end position="248"/>
    </location>
</feature>
<organism>
    <name type="scientific">Trichophyton verrucosum (strain HKI 0517)</name>
    <dbReference type="NCBI Taxonomy" id="663202"/>
    <lineage>
        <taxon>Eukaryota</taxon>
        <taxon>Fungi</taxon>
        <taxon>Dikarya</taxon>
        <taxon>Ascomycota</taxon>
        <taxon>Pezizomycotina</taxon>
        <taxon>Eurotiomycetes</taxon>
        <taxon>Eurotiomycetidae</taxon>
        <taxon>Onygenales</taxon>
        <taxon>Arthrodermataceae</taxon>
        <taxon>Trichophyton</taxon>
    </lineage>
</organism>